<organism>
    <name type="scientific">Salmonella choleraesuis (strain SC-B67)</name>
    <dbReference type="NCBI Taxonomy" id="321314"/>
    <lineage>
        <taxon>Bacteria</taxon>
        <taxon>Pseudomonadati</taxon>
        <taxon>Pseudomonadota</taxon>
        <taxon>Gammaproteobacteria</taxon>
        <taxon>Enterobacterales</taxon>
        <taxon>Enterobacteriaceae</taxon>
        <taxon>Salmonella</taxon>
    </lineage>
</organism>
<keyword id="KW-0614">Plasmid</keyword>
<keyword id="KW-0843">Virulence</keyword>
<proteinExistence type="inferred from homology"/>
<evidence type="ECO:0000305" key="1"/>
<protein>
    <recommendedName>
        <fullName>28.1 kDa virulence protein</fullName>
    </recommendedName>
    <alternativeName>
        <fullName>Protein M3 in mba region</fullName>
    </alternativeName>
</protein>
<comment type="function">
    <text>Not known. This protein is involved in the virulence of salmonellas.</text>
</comment>
<comment type="similarity">
    <text evidence="1">Belongs to the SpvA family.</text>
</comment>
<gene>
    <name type="primary">spvA</name>
    <name type="ordered locus">SCH_V03</name>
</gene>
<sequence>MNMNQTTSPALSQVETAIRVPAGNFAKYNYYSVFDIVRQTRKQFINANMSWPGSRGGKAWDLAMGQAQYIRCMFRENQLTRRVRGTLQQTPDNGTNLSSSAVGGIQGQAERRPDLATLMVVNDAINQQIPTLLPYHFPHDQVELSLLNTDVSLEDIISESSIDWPWFLSNSLTGDNSNYAMELASRLSPEQQTLPTEPDNSTATDLTSFYQTNLGLKTADYTPFEALNTFARQLAITVPPGGTVDCGYSACQPAV</sequence>
<geneLocation type="plasmid">
    <name>pKDSc50</name>
</geneLocation>
<geneLocation type="plasmid">
    <name>pSCV50</name>
</geneLocation>
<dbReference type="EMBL" id="X52035">
    <property type="protein sequence ID" value="CAA36277.1"/>
    <property type="molecule type" value="Genomic_DNA"/>
</dbReference>
<dbReference type="EMBL" id="AB040415">
    <property type="protein sequence ID" value="BAB20510.1"/>
    <property type="molecule type" value="Genomic_DNA"/>
</dbReference>
<dbReference type="EMBL" id="AY509003">
    <property type="protein sequence ID" value="AAS58876.1"/>
    <property type="molecule type" value="Genomic_DNA"/>
</dbReference>
<dbReference type="PIR" id="S09497">
    <property type="entry name" value="S09497"/>
</dbReference>
<dbReference type="RefSeq" id="NP_073227.1">
    <property type="nucleotide sequence ID" value="NC_002638.1"/>
</dbReference>
<dbReference type="RefSeq" id="WP_001541537.1">
    <property type="nucleotide sequence ID" value="NC_006855.1"/>
</dbReference>
<dbReference type="RefSeq" id="YP_001598061.1">
    <property type="nucleotide sequence ID" value="NC_010119.1"/>
</dbReference>
<dbReference type="KEGG" id="sec:SCH_V03"/>
<dbReference type="HOGENOM" id="CLU_095334_0_0_6"/>
<dbReference type="Proteomes" id="UP000000538">
    <property type="component" value="Plasmid pSCV50"/>
</dbReference>
<dbReference type="InterPro" id="IPR018003">
    <property type="entry name" value="Insecticidal_toxin/plasmid_vir"/>
</dbReference>
<dbReference type="InterPro" id="IPR003518">
    <property type="entry name" value="Sal_SpvA"/>
</dbReference>
<dbReference type="NCBIfam" id="NF011759">
    <property type="entry name" value="PRK15212.1"/>
    <property type="match status" value="1"/>
</dbReference>
<dbReference type="Pfam" id="PF03538">
    <property type="entry name" value="VRP1"/>
    <property type="match status" value="2"/>
</dbReference>
<dbReference type="PRINTS" id="PR01340">
    <property type="entry name" value="SALSPVAPROT"/>
</dbReference>
<accession>P17449</accession>
<accession>Q5J4C9</accession>
<accession>Q7DIJ9</accession>
<name>VRP1_SALCH</name>
<feature type="chain" id="PRO_0000221659" description="28.1 kDa virulence protein">
    <location>
        <begin position="1"/>
        <end position="255"/>
    </location>
</feature>
<reference key="1">
    <citation type="journal article" date="1990" name="Nucleic Acids Res.">
        <title>Nucleotide sequences of genes encoding 32 kDa and 70 kDa polypeptides in mba region of the virulence plasmid, pKDSc50, of Salmonella choleraesuis.</title>
        <authorList>
            <person name="Matsui H."/>
        </authorList>
    </citation>
    <scope>NUCLEOTIDE SEQUENCE [GENOMIC DNA]</scope>
    <source>
        <strain>RF-1</strain>
        <plasmid>pKDSc50</plasmid>
    </source>
</reference>
<reference key="2">
    <citation type="journal article" date="2001" name="Infect. Immun.">
        <title>Complete DNA sequence and comparative analysis of the 50-kilobase virulence plasmid of Salmonella enterica serovar Choleraesuis.</title>
        <authorList>
            <person name="Haneda T."/>
            <person name="Okada N."/>
            <person name="Nakazawa N."/>
            <person name="Kawakami T."/>
            <person name="Danbara H."/>
        </authorList>
    </citation>
    <scope>NUCLEOTIDE SEQUENCE [GENOMIC DNA]</scope>
    <source>
        <strain>RF-1</strain>
        <plasmid>pKDSc50</plasmid>
    </source>
</reference>
<reference key="3">
    <citation type="journal article" date="2005" name="Nucleic Acids Res.">
        <title>The genome sequence of Salmonella enterica serovar Choleraesuis, a highly invasive and resistant zoonotic pathogen.</title>
        <authorList>
            <person name="Chiu C.-H."/>
            <person name="Tang P."/>
            <person name="Chu C."/>
            <person name="Hu S."/>
            <person name="Bao Q."/>
            <person name="Yu J."/>
            <person name="Chou Y.-Y."/>
            <person name="Wang H.-S."/>
            <person name="Lee Y.-S."/>
        </authorList>
    </citation>
    <scope>NUCLEOTIDE SEQUENCE [LARGE SCALE GENOMIC DNA]</scope>
    <source>
        <strain>SC-B67</strain>
        <plasmid>pSCV50</plasmid>
    </source>
</reference>